<reference key="1">
    <citation type="journal article" date="1999" name="Nat. Genet.">
        <title>Comparative genomes of Chlamydia pneumoniae and C. trachomatis.</title>
        <authorList>
            <person name="Kalman S."/>
            <person name="Mitchell W.P."/>
            <person name="Marathe R."/>
            <person name="Lammel C.J."/>
            <person name="Fan J."/>
            <person name="Hyman R.W."/>
            <person name="Olinger L."/>
            <person name="Grimwood J."/>
            <person name="Davis R.W."/>
            <person name="Stephens R.S."/>
        </authorList>
    </citation>
    <scope>NUCLEOTIDE SEQUENCE [LARGE SCALE GENOMIC DNA]</scope>
    <source>
        <strain>CWL029</strain>
    </source>
</reference>
<reference key="2">
    <citation type="journal article" date="2000" name="Nucleic Acids Res.">
        <title>Genome sequences of Chlamydia trachomatis MoPn and Chlamydia pneumoniae AR39.</title>
        <authorList>
            <person name="Read T.D."/>
            <person name="Brunham R.C."/>
            <person name="Shen C."/>
            <person name="Gill S.R."/>
            <person name="Heidelberg J.F."/>
            <person name="White O."/>
            <person name="Hickey E.K."/>
            <person name="Peterson J.D."/>
            <person name="Utterback T.R."/>
            <person name="Berry K.J."/>
            <person name="Bass S."/>
            <person name="Linher K.D."/>
            <person name="Weidman J.F."/>
            <person name="Khouri H.M."/>
            <person name="Craven B."/>
            <person name="Bowman C."/>
            <person name="Dodson R.J."/>
            <person name="Gwinn M.L."/>
            <person name="Nelson W.C."/>
            <person name="DeBoy R.T."/>
            <person name="Kolonay J.F."/>
            <person name="McClarty G."/>
            <person name="Salzberg S.L."/>
            <person name="Eisen J.A."/>
            <person name="Fraser C.M."/>
        </authorList>
    </citation>
    <scope>NUCLEOTIDE SEQUENCE [LARGE SCALE GENOMIC DNA]</scope>
    <source>
        <strain>AR39</strain>
    </source>
</reference>
<reference key="3">
    <citation type="journal article" date="2000" name="Nucleic Acids Res.">
        <title>Comparison of whole genome sequences of Chlamydia pneumoniae J138 from Japan and CWL029 from USA.</title>
        <authorList>
            <person name="Shirai M."/>
            <person name="Hirakawa H."/>
            <person name="Kimoto M."/>
            <person name="Tabuchi M."/>
            <person name="Kishi F."/>
            <person name="Ouchi K."/>
            <person name="Shiba T."/>
            <person name="Ishii K."/>
            <person name="Hattori M."/>
            <person name="Kuhara S."/>
            <person name="Nakazawa T."/>
        </authorList>
    </citation>
    <scope>NUCLEOTIDE SEQUENCE [LARGE SCALE GENOMIC DNA]</scope>
    <source>
        <strain>J138</strain>
    </source>
</reference>
<reference key="4">
    <citation type="submission" date="2002-05" db="EMBL/GenBank/DDBJ databases">
        <title>The genome sequence of Chlamydia pneumoniae TW183 and comparison with other Chlamydia strains based on whole genome sequence analysis.</title>
        <authorList>
            <person name="Geng M.M."/>
            <person name="Schuhmacher A."/>
            <person name="Muehldorfer I."/>
            <person name="Bensch K.W."/>
            <person name="Schaefer K.P."/>
            <person name="Schneider S."/>
            <person name="Pohl T."/>
            <person name="Essig A."/>
            <person name="Marre R."/>
            <person name="Melchers K."/>
        </authorList>
    </citation>
    <scope>NUCLEOTIDE SEQUENCE [LARGE SCALE GENOMIC DNA]</scope>
    <source>
        <strain>TW-183</strain>
    </source>
</reference>
<dbReference type="EC" id="1.15.1.1"/>
<dbReference type="EMBL" id="AE001363">
    <property type="protein sequence ID" value="AAD18210.1"/>
    <property type="molecule type" value="Genomic_DNA"/>
</dbReference>
<dbReference type="EMBL" id="AE002161">
    <property type="protein sequence ID" value="AAF38524.1"/>
    <property type="molecule type" value="Genomic_DNA"/>
</dbReference>
<dbReference type="EMBL" id="BA000008">
    <property type="protein sequence ID" value="BAA98268.1"/>
    <property type="molecule type" value="Genomic_DNA"/>
</dbReference>
<dbReference type="EMBL" id="AE009440">
    <property type="protein sequence ID" value="AAP97991.1"/>
    <property type="molecule type" value="Genomic_DNA"/>
</dbReference>
<dbReference type="PIR" id="B72124">
    <property type="entry name" value="B72124"/>
</dbReference>
<dbReference type="PIR" id="B86498">
    <property type="entry name" value="B86498"/>
</dbReference>
<dbReference type="RefSeq" id="NP_224265.1">
    <property type="nucleotide sequence ID" value="NC_000922.1"/>
</dbReference>
<dbReference type="RefSeq" id="WP_010882707.1">
    <property type="nucleotide sequence ID" value="NZ_LN847257.1"/>
</dbReference>
<dbReference type="SMR" id="Q9Z9C4"/>
<dbReference type="STRING" id="406984.CPK_ORF00561"/>
<dbReference type="GeneID" id="45050101"/>
<dbReference type="KEGG" id="cpa:CP_0718"/>
<dbReference type="KEGG" id="cpj:sodM"/>
<dbReference type="KEGG" id="cpn:CPn_0057"/>
<dbReference type="KEGG" id="cpt:CpB0058"/>
<dbReference type="PATRIC" id="fig|115713.3.peg.65"/>
<dbReference type="eggNOG" id="COG0605">
    <property type="taxonomic scope" value="Bacteria"/>
</dbReference>
<dbReference type="HOGENOM" id="CLU_031625_2_1_0"/>
<dbReference type="OrthoDB" id="9803125at2"/>
<dbReference type="Proteomes" id="UP000000583">
    <property type="component" value="Chromosome"/>
</dbReference>
<dbReference type="Proteomes" id="UP000000801">
    <property type="component" value="Chromosome"/>
</dbReference>
<dbReference type="GO" id="GO:0030145">
    <property type="term" value="F:manganese ion binding"/>
    <property type="evidence" value="ECO:0007669"/>
    <property type="project" value="TreeGrafter"/>
</dbReference>
<dbReference type="GO" id="GO:0004784">
    <property type="term" value="F:superoxide dismutase activity"/>
    <property type="evidence" value="ECO:0007669"/>
    <property type="project" value="UniProtKB-EC"/>
</dbReference>
<dbReference type="FunFam" id="1.10.287.990:FF:000001">
    <property type="entry name" value="Superoxide dismutase"/>
    <property type="match status" value="1"/>
</dbReference>
<dbReference type="FunFam" id="3.55.40.20:FF:000004">
    <property type="entry name" value="Superoxide dismutase [Fe]"/>
    <property type="match status" value="1"/>
</dbReference>
<dbReference type="Gene3D" id="1.10.287.990">
    <property type="entry name" value="Fe,Mn superoxide dismutase (SOD) domain"/>
    <property type="match status" value="1"/>
</dbReference>
<dbReference type="Gene3D" id="3.55.40.20">
    <property type="entry name" value="Iron/manganese superoxide dismutase, C-terminal domain"/>
    <property type="match status" value="1"/>
</dbReference>
<dbReference type="InterPro" id="IPR050265">
    <property type="entry name" value="Fe/Mn_Superoxide_Dismutase"/>
</dbReference>
<dbReference type="InterPro" id="IPR001189">
    <property type="entry name" value="Mn/Fe_SOD"/>
</dbReference>
<dbReference type="InterPro" id="IPR019833">
    <property type="entry name" value="Mn/Fe_SOD_BS"/>
</dbReference>
<dbReference type="InterPro" id="IPR019832">
    <property type="entry name" value="Mn/Fe_SOD_C"/>
</dbReference>
<dbReference type="InterPro" id="IPR019831">
    <property type="entry name" value="Mn/Fe_SOD_N"/>
</dbReference>
<dbReference type="InterPro" id="IPR036324">
    <property type="entry name" value="Mn/Fe_SOD_N_sf"/>
</dbReference>
<dbReference type="InterPro" id="IPR036314">
    <property type="entry name" value="SOD_C_sf"/>
</dbReference>
<dbReference type="PANTHER" id="PTHR11404">
    <property type="entry name" value="SUPEROXIDE DISMUTASE 2"/>
    <property type="match status" value="1"/>
</dbReference>
<dbReference type="PANTHER" id="PTHR11404:SF6">
    <property type="entry name" value="SUPEROXIDE DISMUTASE [MN], MITOCHONDRIAL"/>
    <property type="match status" value="1"/>
</dbReference>
<dbReference type="Pfam" id="PF02777">
    <property type="entry name" value="Sod_Fe_C"/>
    <property type="match status" value="1"/>
</dbReference>
<dbReference type="Pfam" id="PF00081">
    <property type="entry name" value="Sod_Fe_N"/>
    <property type="match status" value="1"/>
</dbReference>
<dbReference type="PIRSF" id="PIRSF000349">
    <property type="entry name" value="SODismutase"/>
    <property type="match status" value="1"/>
</dbReference>
<dbReference type="PRINTS" id="PR01703">
    <property type="entry name" value="MNSODISMTASE"/>
</dbReference>
<dbReference type="SUPFAM" id="SSF54719">
    <property type="entry name" value="Fe,Mn superoxide dismutase (SOD), C-terminal domain"/>
    <property type="match status" value="1"/>
</dbReference>
<dbReference type="SUPFAM" id="SSF46609">
    <property type="entry name" value="Fe,Mn superoxide dismutase (SOD), N-terminal domain"/>
    <property type="match status" value="1"/>
</dbReference>
<dbReference type="PROSITE" id="PS00088">
    <property type="entry name" value="SOD_MN"/>
    <property type="match status" value="1"/>
</dbReference>
<comment type="function">
    <text>Destroys superoxide anion radicals which are normally produced within the cells and which are toxic to biological systems.</text>
</comment>
<comment type="catalytic activity">
    <reaction>
        <text>2 superoxide + 2 H(+) = H2O2 + O2</text>
        <dbReference type="Rhea" id="RHEA:20696"/>
        <dbReference type="ChEBI" id="CHEBI:15378"/>
        <dbReference type="ChEBI" id="CHEBI:15379"/>
        <dbReference type="ChEBI" id="CHEBI:16240"/>
        <dbReference type="ChEBI" id="CHEBI:18421"/>
        <dbReference type="EC" id="1.15.1.1"/>
    </reaction>
</comment>
<comment type="cofactor">
    <cofactor evidence="1">
        <name>Mn(2+)</name>
        <dbReference type="ChEBI" id="CHEBI:29035"/>
    </cofactor>
    <text evidence="1">Binds 1 Mn(2+) ion per subunit.</text>
</comment>
<comment type="subunit">
    <text evidence="1">Homodimer.</text>
</comment>
<comment type="similarity">
    <text evidence="2">Belongs to the iron/manganese superoxide dismutase family.</text>
</comment>
<accession>Q9Z9C4</accession>
<gene>
    <name type="primary">sodA</name>
    <name type="synonym">sodM</name>
    <name type="ordered locus">CPn_0057</name>
    <name type="ordered locus">CP_0718</name>
    <name type="ordered locus">CpB0058</name>
</gene>
<proteinExistence type="inferred from homology"/>
<feature type="chain" id="PRO_0000160026" description="Superoxide dismutase [Mn]">
    <location>
        <begin position="1"/>
        <end position="207"/>
    </location>
</feature>
<feature type="binding site" evidence="1">
    <location>
        <position position="30"/>
    </location>
    <ligand>
        <name>Mn(2+)</name>
        <dbReference type="ChEBI" id="CHEBI:29035"/>
    </ligand>
</feature>
<feature type="binding site" evidence="1">
    <location>
        <position position="78"/>
    </location>
    <ligand>
        <name>Mn(2+)</name>
        <dbReference type="ChEBI" id="CHEBI:29035"/>
    </ligand>
</feature>
<feature type="binding site" evidence="1">
    <location>
        <position position="166"/>
    </location>
    <ligand>
        <name>Mn(2+)</name>
        <dbReference type="ChEBI" id="CHEBI:29035"/>
    </ligand>
</feature>
<feature type="binding site" evidence="1">
    <location>
        <position position="170"/>
    </location>
    <ligand>
        <name>Mn(2+)</name>
        <dbReference type="ChEBI" id="CHEBI:29035"/>
    </ligand>
</feature>
<protein>
    <recommendedName>
        <fullName>Superoxide dismutase [Mn]</fullName>
        <ecNumber>1.15.1.1</ecNumber>
    </recommendedName>
</protein>
<evidence type="ECO:0000250" key="1"/>
<evidence type="ECO:0000305" key="2"/>
<organism>
    <name type="scientific">Chlamydia pneumoniae</name>
    <name type="common">Chlamydophila pneumoniae</name>
    <dbReference type="NCBI Taxonomy" id="83558"/>
    <lineage>
        <taxon>Bacteria</taxon>
        <taxon>Pseudomonadati</taxon>
        <taxon>Chlamydiota</taxon>
        <taxon>Chlamydiia</taxon>
        <taxon>Chlamydiales</taxon>
        <taxon>Chlamydiaceae</taxon>
        <taxon>Chlamydia/Chlamydophila group</taxon>
        <taxon>Chlamydia</taxon>
    </lineage>
</organism>
<name>SODM_CHLPN</name>
<sequence>MSFVPYSLPELPYDYDALEPVISSEIMILHHQKHHQIYINNLNAALKRLDAAETQQNLNELIALEPALRFNGGGHINHSLFWETLAPIDQGGGQPPKHELLSLIERFWGTMDNFLKKLIEVAAGVQGSGWAWLGFCPAKQELVLQATANQDPLEPLTGKLPLLGVDVWEHAYYLQYKNVRMDYLKAFPQIINWGHIENRFSEIISSK</sequence>
<keyword id="KW-0464">Manganese</keyword>
<keyword id="KW-0479">Metal-binding</keyword>
<keyword id="KW-0560">Oxidoreductase</keyword>